<comment type="function">
    <text evidence="1">The RuvA-RuvB-RuvC complex processes Holliday junction (HJ) DNA during genetic recombination and DNA repair, while the RuvA-RuvB complex plays an important role in the rescue of blocked DNA replication forks via replication fork reversal (RFR). RuvA specifically binds to HJ cruciform DNA, conferring on it an open structure. The RuvB hexamer acts as an ATP-dependent pump, pulling dsDNA into and through the RuvAB complex. RuvB forms 2 homohexamers on either side of HJ DNA bound by 1 or 2 RuvA tetramers; 4 subunits per hexamer contact DNA at a time. Coordinated motions by a converter formed by DNA-disengaged RuvB subunits stimulates ATP hydrolysis and nucleotide exchange. Immobilization of the converter enables RuvB to convert the ATP-contained energy into a lever motion, pulling 2 nucleotides of DNA out of the RuvA tetramer per ATP hydrolyzed, thus driving DNA branch migration. The RuvB motors rotate together with the DNA substrate, which together with the progressing nucleotide cycle form the mechanistic basis for DNA recombination by continuous HJ branch migration. Branch migration allows RuvC to scan DNA until it finds its consensus sequence, where it cleaves and resolves cruciform DNA.</text>
</comment>
<comment type="catalytic activity">
    <reaction evidence="1">
        <text>ATP + H2O = ADP + phosphate + H(+)</text>
        <dbReference type="Rhea" id="RHEA:13065"/>
        <dbReference type="ChEBI" id="CHEBI:15377"/>
        <dbReference type="ChEBI" id="CHEBI:15378"/>
        <dbReference type="ChEBI" id="CHEBI:30616"/>
        <dbReference type="ChEBI" id="CHEBI:43474"/>
        <dbReference type="ChEBI" id="CHEBI:456216"/>
    </reaction>
</comment>
<comment type="subunit">
    <text evidence="1">Homohexamer. Forms an RuvA(8)-RuvB(12)-Holliday junction (HJ) complex. HJ DNA is sandwiched between 2 RuvA tetramers; dsDNA enters through RuvA and exits via RuvB. An RuvB hexamer assembles on each DNA strand where it exits the tetramer. Each RuvB hexamer is contacted by two RuvA subunits (via domain III) on 2 adjacent RuvB subunits; this complex drives branch migration. In the full resolvosome a probable DNA-RuvA(4)-RuvB(12)-RuvC(2) complex forms which resolves the HJ.</text>
</comment>
<comment type="subcellular location">
    <subcellularLocation>
        <location evidence="1">Cytoplasm</location>
    </subcellularLocation>
</comment>
<comment type="domain">
    <text evidence="1">Has 3 domains, the large (RuvB-L) and small ATPase (RuvB-S) domains and the C-terminal head (RuvB-H) domain. The head domain binds DNA, while the ATPase domains jointly bind ATP, ADP or are empty depending on the state of the subunit in the translocation cycle. During a single DNA translocation step the structure of each domain remains the same, but their relative positions change.</text>
</comment>
<comment type="similarity">
    <text evidence="1">Belongs to the RuvB family.</text>
</comment>
<sequence length="336" mass="37174">MIEADRLISAGTTLPEDVADRAIRPKLLEEYVGQPQVRSQMEIFIKAAKLRGDALDHLLIFGPPGLGKTTLANIVANEMGVNLRTTSGPVLEKAGDLAAMLTNLEPHDVLFIDEIHRLSPVVEEVLYPAMEDYQLDIMIGEGPAARSIKIDLPPFTLIGATTRAGSLTSPLRDRFGIVQRLEFYQVPDLQYIVSRSARFMGLEMSDDGALEVARRARGTPRIANRLLRRVRDFAEVKHDGTISADIAAQALDMLNVDAEGFDYMDRKLLLAVIDKFFGGPVGLDNLAAAIGEERETIEDVLEPYLIQQGFLQRTPRGRMATTRAWNHFGITPPEMP</sequence>
<name>RUVB_ECODH</name>
<proteinExistence type="inferred from homology"/>
<reference key="1">
    <citation type="journal article" date="2008" name="J. Bacteriol.">
        <title>The complete genome sequence of Escherichia coli DH10B: insights into the biology of a laboratory workhorse.</title>
        <authorList>
            <person name="Durfee T."/>
            <person name="Nelson R."/>
            <person name="Baldwin S."/>
            <person name="Plunkett G. III"/>
            <person name="Burland V."/>
            <person name="Mau B."/>
            <person name="Petrosino J.F."/>
            <person name="Qin X."/>
            <person name="Muzny D.M."/>
            <person name="Ayele M."/>
            <person name="Gibbs R.A."/>
            <person name="Csorgo B."/>
            <person name="Posfai G."/>
            <person name="Weinstock G.M."/>
            <person name="Blattner F.R."/>
        </authorList>
    </citation>
    <scope>NUCLEOTIDE SEQUENCE [LARGE SCALE GENOMIC DNA]</scope>
    <source>
        <strain>K12 / DH10B</strain>
    </source>
</reference>
<feature type="chain" id="PRO_1000089641" description="Holliday junction branch migration complex subunit RuvB">
    <location>
        <begin position="1"/>
        <end position="336"/>
    </location>
</feature>
<feature type="region of interest" description="Large ATPase domain (RuvB-L)" evidence="1">
    <location>
        <begin position="4"/>
        <end position="184"/>
    </location>
</feature>
<feature type="region of interest" description="Small ATPAse domain (RuvB-S)" evidence="1">
    <location>
        <begin position="185"/>
        <end position="255"/>
    </location>
</feature>
<feature type="region of interest" description="Head domain (RuvB-H)" evidence="1">
    <location>
        <begin position="258"/>
        <end position="336"/>
    </location>
</feature>
<feature type="binding site" evidence="1">
    <location>
        <position position="23"/>
    </location>
    <ligand>
        <name>ATP</name>
        <dbReference type="ChEBI" id="CHEBI:30616"/>
    </ligand>
</feature>
<feature type="binding site" evidence="1">
    <location>
        <position position="24"/>
    </location>
    <ligand>
        <name>ATP</name>
        <dbReference type="ChEBI" id="CHEBI:30616"/>
    </ligand>
</feature>
<feature type="binding site" evidence="1">
    <location>
        <position position="65"/>
    </location>
    <ligand>
        <name>ATP</name>
        <dbReference type="ChEBI" id="CHEBI:30616"/>
    </ligand>
</feature>
<feature type="binding site" evidence="1">
    <location>
        <position position="68"/>
    </location>
    <ligand>
        <name>ATP</name>
        <dbReference type="ChEBI" id="CHEBI:30616"/>
    </ligand>
</feature>
<feature type="binding site" evidence="1">
    <location>
        <position position="69"/>
    </location>
    <ligand>
        <name>ATP</name>
        <dbReference type="ChEBI" id="CHEBI:30616"/>
    </ligand>
</feature>
<feature type="binding site" evidence="1">
    <location>
        <position position="69"/>
    </location>
    <ligand>
        <name>Mg(2+)</name>
        <dbReference type="ChEBI" id="CHEBI:18420"/>
    </ligand>
</feature>
<feature type="binding site" evidence="1">
    <location>
        <position position="70"/>
    </location>
    <ligand>
        <name>ATP</name>
        <dbReference type="ChEBI" id="CHEBI:30616"/>
    </ligand>
</feature>
<feature type="binding site" evidence="1">
    <location>
        <begin position="131"/>
        <end position="133"/>
    </location>
    <ligand>
        <name>ATP</name>
        <dbReference type="ChEBI" id="CHEBI:30616"/>
    </ligand>
</feature>
<feature type="binding site" evidence="1">
    <location>
        <position position="174"/>
    </location>
    <ligand>
        <name>ATP</name>
        <dbReference type="ChEBI" id="CHEBI:30616"/>
    </ligand>
</feature>
<feature type="binding site" evidence="1">
    <location>
        <position position="184"/>
    </location>
    <ligand>
        <name>ATP</name>
        <dbReference type="ChEBI" id="CHEBI:30616"/>
    </ligand>
</feature>
<feature type="binding site" evidence="1">
    <location>
        <position position="221"/>
    </location>
    <ligand>
        <name>ATP</name>
        <dbReference type="ChEBI" id="CHEBI:30616"/>
    </ligand>
</feature>
<feature type="binding site" evidence="1">
    <location>
        <position position="294"/>
    </location>
    <ligand>
        <name>DNA</name>
        <dbReference type="ChEBI" id="CHEBI:16991"/>
    </ligand>
</feature>
<feature type="binding site" evidence="1">
    <location>
        <position position="313"/>
    </location>
    <ligand>
        <name>DNA</name>
        <dbReference type="ChEBI" id="CHEBI:16991"/>
    </ligand>
</feature>
<feature type="binding site" evidence="1">
    <location>
        <position position="318"/>
    </location>
    <ligand>
        <name>DNA</name>
        <dbReference type="ChEBI" id="CHEBI:16991"/>
    </ligand>
</feature>
<keyword id="KW-0067">ATP-binding</keyword>
<keyword id="KW-0963">Cytoplasm</keyword>
<keyword id="KW-0227">DNA damage</keyword>
<keyword id="KW-0233">DNA recombination</keyword>
<keyword id="KW-0234">DNA repair</keyword>
<keyword id="KW-0238">DNA-binding</keyword>
<keyword id="KW-0378">Hydrolase</keyword>
<keyword id="KW-0547">Nucleotide-binding</keyword>
<keyword id="KW-0742">SOS response</keyword>
<dbReference type="EC" id="3.6.4.-" evidence="1"/>
<dbReference type="EMBL" id="CP000948">
    <property type="protein sequence ID" value="ACB03058.1"/>
    <property type="molecule type" value="Genomic_DNA"/>
</dbReference>
<dbReference type="RefSeq" id="WP_000568519.1">
    <property type="nucleotide sequence ID" value="NC_010473.1"/>
</dbReference>
<dbReference type="SMR" id="B1XHC8"/>
<dbReference type="GeneID" id="75202735"/>
<dbReference type="KEGG" id="ecd:ECDH10B_2001"/>
<dbReference type="HOGENOM" id="CLU_055599_1_0_6"/>
<dbReference type="GO" id="GO:0005737">
    <property type="term" value="C:cytoplasm"/>
    <property type="evidence" value="ECO:0007669"/>
    <property type="project" value="UniProtKB-SubCell"/>
</dbReference>
<dbReference type="GO" id="GO:0048476">
    <property type="term" value="C:Holliday junction resolvase complex"/>
    <property type="evidence" value="ECO:0007669"/>
    <property type="project" value="UniProtKB-UniRule"/>
</dbReference>
<dbReference type="GO" id="GO:0005524">
    <property type="term" value="F:ATP binding"/>
    <property type="evidence" value="ECO:0007669"/>
    <property type="project" value="UniProtKB-UniRule"/>
</dbReference>
<dbReference type="GO" id="GO:0016887">
    <property type="term" value="F:ATP hydrolysis activity"/>
    <property type="evidence" value="ECO:0007669"/>
    <property type="project" value="InterPro"/>
</dbReference>
<dbReference type="GO" id="GO:0000400">
    <property type="term" value="F:four-way junction DNA binding"/>
    <property type="evidence" value="ECO:0007669"/>
    <property type="project" value="UniProtKB-UniRule"/>
</dbReference>
<dbReference type="GO" id="GO:0009378">
    <property type="term" value="F:four-way junction helicase activity"/>
    <property type="evidence" value="ECO:0007669"/>
    <property type="project" value="InterPro"/>
</dbReference>
<dbReference type="GO" id="GO:0006310">
    <property type="term" value="P:DNA recombination"/>
    <property type="evidence" value="ECO:0007669"/>
    <property type="project" value="UniProtKB-UniRule"/>
</dbReference>
<dbReference type="GO" id="GO:0006281">
    <property type="term" value="P:DNA repair"/>
    <property type="evidence" value="ECO:0007669"/>
    <property type="project" value="UniProtKB-UniRule"/>
</dbReference>
<dbReference type="GO" id="GO:0009432">
    <property type="term" value="P:SOS response"/>
    <property type="evidence" value="ECO:0007669"/>
    <property type="project" value="UniProtKB-UniRule"/>
</dbReference>
<dbReference type="CDD" id="cd00009">
    <property type="entry name" value="AAA"/>
    <property type="match status" value="1"/>
</dbReference>
<dbReference type="FunFam" id="1.10.10.10:FF:000086">
    <property type="entry name" value="Holliday junction ATP-dependent DNA helicase RuvB"/>
    <property type="match status" value="1"/>
</dbReference>
<dbReference type="FunFam" id="1.10.8.60:FF:000023">
    <property type="entry name" value="Holliday junction ATP-dependent DNA helicase RuvB"/>
    <property type="match status" value="1"/>
</dbReference>
<dbReference type="FunFam" id="3.40.50.300:FF:000073">
    <property type="entry name" value="Holliday junction ATP-dependent DNA helicase RuvB"/>
    <property type="match status" value="1"/>
</dbReference>
<dbReference type="Gene3D" id="1.10.8.60">
    <property type="match status" value="1"/>
</dbReference>
<dbReference type="Gene3D" id="3.40.50.300">
    <property type="entry name" value="P-loop containing nucleotide triphosphate hydrolases"/>
    <property type="match status" value="1"/>
</dbReference>
<dbReference type="Gene3D" id="1.10.10.10">
    <property type="entry name" value="Winged helix-like DNA-binding domain superfamily/Winged helix DNA-binding domain"/>
    <property type="match status" value="1"/>
</dbReference>
<dbReference type="HAMAP" id="MF_00016">
    <property type="entry name" value="DNA_HJ_migration_RuvB"/>
    <property type="match status" value="1"/>
</dbReference>
<dbReference type="InterPro" id="IPR003593">
    <property type="entry name" value="AAA+_ATPase"/>
</dbReference>
<dbReference type="InterPro" id="IPR041445">
    <property type="entry name" value="AAA_lid_4"/>
</dbReference>
<dbReference type="InterPro" id="IPR004605">
    <property type="entry name" value="DNA_helicase_Holl-junc_RuvB"/>
</dbReference>
<dbReference type="InterPro" id="IPR027417">
    <property type="entry name" value="P-loop_NTPase"/>
</dbReference>
<dbReference type="InterPro" id="IPR008824">
    <property type="entry name" value="RuvB-like_N"/>
</dbReference>
<dbReference type="InterPro" id="IPR008823">
    <property type="entry name" value="RuvB_C"/>
</dbReference>
<dbReference type="InterPro" id="IPR036388">
    <property type="entry name" value="WH-like_DNA-bd_sf"/>
</dbReference>
<dbReference type="InterPro" id="IPR036390">
    <property type="entry name" value="WH_DNA-bd_sf"/>
</dbReference>
<dbReference type="NCBIfam" id="NF000868">
    <property type="entry name" value="PRK00080.1"/>
    <property type="match status" value="1"/>
</dbReference>
<dbReference type="NCBIfam" id="TIGR00635">
    <property type="entry name" value="ruvB"/>
    <property type="match status" value="1"/>
</dbReference>
<dbReference type="PANTHER" id="PTHR42848">
    <property type="match status" value="1"/>
</dbReference>
<dbReference type="PANTHER" id="PTHR42848:SF1">
    <property type="entry name" value="HOLLIDAY JUNCTION BRANCH MIGRATION COMPLEX SUBUNIT RUVB"/>
    <property type="match status" value="1"/>
</dbReference>
<dbReference type="Pfam" id="PF17864">
    <property type="entry name" value="AAA_lid_4"/>
    <property type="match status" value="1"/>
</dbReference>
<dbReference type="Pfam" id="PF05491">
    <property type="entry name" value="RuvB_C"/>
    <property type="match status" value="1"/>
</dbReference>
<dbReference type="Pfam" id="PF05496">
    <property type="entry name" value="RuvB_N"/>
    <property type="match status" value="1"/>
</dbReference>
<dbReference type="SMART" id="SM00382">
    <property type="entry name" value="AAA"/>
    <property type="match status" value="1"/>
</dbReference>
<dbReference type="SUPFAM" id="SSF52540">
    <property type="entry name" value="P-loop containing nucleoside triphosphate hydrolases"/>
    <property type="match status" value="1"/>
</dbReference>
<dbReference type="SUPFAM" id="SSF46785">
    <property type="entry name" value="Winged helix' DNA-binding domain"/>
    <property type="match status" value="1"/>
</dbReference>
<organism>
    <name type="scientific">Escherichia coli (strain K12 / DH10B)</name>
    <dbReference type="NCBI Taxonomy" id="316385"/>
    <lineage>
        <taxon>Bacteria</taxon>
        <taxon>Pseudomonadati</taxon>
        <taxon>Pseudomonadota</taxon>
        <taxon>Gammaproteobacteria</taxon>
        <taxon>Enterobacterales</taxon>
        <taxon>Enterobacteriaceae</taxon>
        <taxon>Escherichia</taxon>
    </lineage>
</organism>
<protein>
    <recommendedName>
        <fullName evidence="1">Holliday junction branch migration complex subunit RuvB</fullName>
        <ecNumber evidence="1">3.6.4.-</ecNumber>
    </recommendedName>
</protein>
<accession>B1XHC8</accession>
<evidence type="ECO:0000255" key="1">
    <source>
        <dbReference type="HAMAP-Rule" id="MF_00016"/>
    </source>
</evidence>
<gene>
    <name evidence="1" type="primary">ruvB</name>
    <name type="ordered locus">ECDH10B_2001</name>
</gene>